<sequence length="139" mass="16140">MLSPKRTKFRKQHRGRMRGMAYRGNNIQFGDYALQAVEPSWITARQIEAARRAMTRYIKRGGKIWIRIFPDKPITMRPAETRMGSGKGNPEFWVAVVKPGRIMFEMNGVAEPIAREAMRLAAQKLPIKTKFITRNEEYI</sequence>
<feature type="chain" id="PRO_1000143039" description="Large ribosomal subunit protein uL16">
    <location>
        <begin position="1"/>
        <end position="139"/>
    </location>
</feature>
<evidence type="ECO:0000255" key="1">
    <source>
        <dbReference type="HAMAP-Rule" id="MF_01342"/>
    </source>
</evidence>
<evidence type="ECO:0000305" key="2"/>
<comment type="function">
    <text evidence="1">Binds 23S rRNA and is also seen to make contacts with the A and possibly P site tRNAs.</text>
</comment>
<comment type="subunit">
    <text evidence="1">Part of the 50S ribosomal subunit.</text>
</comment>
<comment type="similarity">
    <text evidence="1">Belongs to the universal ribosomal protein uL16 family.</text>
</comment>
<accession>B1XJT2</accession>
<proteinExistence type="inferred from homology"/>
<dbReference type="EMBL" id="CP000951">
    <property type="protein sequence ID" value="ACA99060.1"/>
    <property type="molecule type" value="Genomic_DNA"/>
</dbReference>
<dbReference type="RefSeq" id="WP_012306683.1">
    <property type="nucleotide sequence ID" value="NZ_JAHHPU010000001.1"/>
</dbReference>
<dbReference type="SMR" id="B1XJT2"/>
<dbReference type="STRING" id="32049.SYNPCC7002_A1058"/>
<dbReference type="KEGG" id="syp:SYNPCC7002_A1058"/>
<dbReference type="eggNOG" id="COG0197">
    <property type="taxonomic scope" value="Bacteria"/>
</dbReference>
<dbReference type="HOGENOM" id="CLU_078858_2_1_3"/>
<dbReference type="Proteomes" id="UP000001688">
    <property type="component" value="Chromosome"/>
</dbReference>
<dbReference type="GO" id="GO:0022625">
    <property type="term" value="C:cytosolic large ribosomal subunit"/>
    <property type="evidence" value="ECO:0007669"/>
    <property type="project" value="TreeGrafter"/>
</dbReference>
<dbReference type="GO" id="GO:0019843">
    <property type="term" value="F:rRNA binding"/>
    <property type="evidence" value="ECO:0007669"/>
    <property type="project" value="UniProtKB-UniRule"/>
</dbReference>
<dbReference type="GO" id="GO:0003735">
    <property type="term" value="F:structural constituent of ribosome"/>
    <property type="evidence" value="ECO:0007669"/>
    <property type="project" value="InterPro"/>
</dbReference>
<dbReference type="GO" id="GO:0000049">
    <property type="term" value="F:tRNA binding"/>
    <property type="evidence" value="ECO:0007669"/>
    <property type="project" value="UniProtKB-KW"/>
</dbReference>
<dbReference type="GO" id="GO:0006412">
    <property type="term" value="P:translation"/>
    <property type="evidence" value="ECO:0007669"/>
    <property type="project" value="UniProtKB-UniRule"/>
</dbReference>
<dbReference type="CDD" id="cd01433">
    <property type="entry name" value="Ribosomal_L16_L10e"/>
    <property type="match status" value="1"/>
</dbReference>
<dbReference type="FunFam" id="3.90.1170.10:FF:000001">
    <property type="entry name" value="50S ribosomal protein L16"/>
    <property type="match status" value="1"/>
</dbReference>
<dbReference type="Gene3D" id="3.90.1170.10">
    <property type="entry name" value="Ribosomal protein L10e/L16"/>
    <property type="match status" value="1"/>
</dbReference>
<dbReference type="HAMAP" id="MF_01342">
    <property type="entry name" value="Ribosomal_uL16"/>
    <property type="match status" value="1"/>
</dbReference>
<dbReference type="InterPro" id="IPR047873">
    <property type="entry name" value="Ribosomal_uL16"/>
</dbReference>
<dbReference type="InterPro" id="IPR000114">
    <property type="entry name" value="Ribosomal_uL16_bact-type"/>
</dbReference>
<dbReference type="InterPro" id="IPR020798">
    <property type="entry name" value="Ribosomal_uL16_CS"/>
</dbReference>
<dbReference type="InterPro" id="IPR016180">
    <property type="entry name" value="Ribosomal_uL16_dom"/>
</dbReference>
<dbReference type="InterPro" id="IPR036920">
    <property type="entry name" value="Ribosomal_uL16_sf"/>
</dbReference>
<dbReference type="NCBIfam" id="TIGR01164">
    <property type="entry name" value="rplP_bact"/>
    <property type="match status" value="1"/>
</dbReference>
<dbReference type="PANTHER" id="PTHR12220">
    <property type="entry name" value="50S/60S RIBOSOMAL PROTEIN L16"/>
    <property type="match status" value="1"/>
</dbReference>
<dbReference type="PANTHER" id="PTHR12220:SF13">
    <property type="entry name" value="LARGE RIBOSOMAL SUBUNIT PROTEIN UL16M"/>
    <property type="match status" value="1"/>
</dbReference>
<dbReference type="Pfam" id="PF00252">
    <property type="entry name" value="Ribosomal_L16"/>
    <property type="match status" value="1"/>
</dbReference>
<dbReference type="PRINTS" id="PR00060">
    <property type="entry name" value="RIBOSOMALL16"/>
</dbReference>
<dbReference type="SUPFAM" id="SSF54686">
    <property type="entry name" value="Ribosomal protein L16p/L10e"/>
    <property type="match status" value="1"/>
</dbReference>
<dbReference type="PROSITE" id="PS00586">
    <property type="entry name" value="RIBOSOMAL_L16_1"/>
    <property type="match status" value="1"/>
</dbReference>
<dbReference type="PROSITE" id="PS00701">
    <property type="entry name" value="RIBOSOMAL_L16_2"/>
    <property type="match status" value="1"/>
</dbReference>
<organism>
    <name type="scientific">Picosynechococcus sp. (strain ATCC 27264 / PCC 7002 / PR-6)</name>
    <name type="common">Agmenellum quadruplicatum</name>
    <dbReference type="NCBI Taxonomy" id="32049"/>
    <lineage>
        <taxon>Bacteria</taxon>
        <taxon>Bacillati</taxon>
        <taxon>Cyanobacteriota</taxon>
        <taxon>Cyanophyceae</taxon>
        <taxon>Oscillatoriophycideae</taxon>
        <taxon>Chroococcales</taxon>
        <taxon>Geminocystaceae</taxon>
        <taxon>Picosynechococcus</taxon>
    </lineage>
</organism>
<gene>
    <name evidence="1" type="primary">rplP</name>
    <name evidence="1" type="synonym">rpl16</name>
    <name type="ordered locus">SYNPCC7002_A1058</name>
</gene>
<name>RL16_PICP2</name>
<reference key="1">
    <citation type="submission" date="2008-02" db="EMBL/GenBank/DDBJ databases">
        <title>Complete sequence of Synechococcus sp. PCC 7002.</title>
        <authorList>
            <person name="Li T."/>
            <person name="Zhao J."/>
            <person name="Zhao C."/>
            <person name="Liu Z."/>
            <person name="Zhao F."/>
            <person name="Marquardt J."/>
            <person name="Nomura C.T."/>
            <person name="Persson S."/>
            <person name="Detter J.C."/>
            <person name="Richardson P.M."/>
            <person name="Lanz C."/>
            <person name="Schuster S.C."/>
            <person name="Wang J."/>
            <person name="Li S."/>
            <person name="Huang X."/>
            <person name="Cai T."/>
            <person name="Yu Z."/>
            <person name="Luo J."/>
            <person name="Zhao J."/>
            <person name="Bryant D.A."/>
        </authorList>
    </citation>
    <scope>NUCLEOTIDE SEQUENCE [LARGE SCALE GENOMIC DNA]</scope>
    <source>
        <strain>ATCC 27264 / PCC 7002 / PR-6</strain>
    </source>
</reference>
<keyword id="KW-1185">Reference proteome</keyword>
<keyword id="KW-0687">Ribonucleoprotein</keyword>
<keyword id="KW-0689">Ribosomal protein</keyword>
<keyword id="KW-0694">RNA-binding</keyword>
<keyword id="KW-0699">rRNA-binding</keyword>
<keyword id="KW-0820">tRNA-binding</keyword>
<protein>
    <recommendedName>
        <fullName evidence="1">Large ribosomal subunit protein uL16</fullName>
    </recommendedName>
    <alternativeName>
        <fullName evidence="2">50S ribosomal protein L16</fullName>
    </alternativeName>
</protein>